<comment type="function">
    <text evidence="1">Specifically methylates guanosine-37 in various tRNAs.</text>
</comment>
<comment type="catalytic activity">
    <reaction evidence="1">
        <text>guanosine(37) in tRNA + S-adenosyl-L-methionine = N(1)-methylguanosine(37) in tRNA + S-adenosyl-L-homocysteine + H(+)</text>
        <dbReference type="Rhea" id="RHEA:36899"/>
        <dbReference type="Rhea" id="RHEA-COMP:10145"/>
        <dbReference type="Rhea" id="RHEA-COMP:10147"/>
        <dbReference type="ChEBI" id="CHEBI:15378"/>
        <dbReference type="ChEBI" id="CHEBI:57856"/>
        <dbReference type="ChEBI" id="CHEBI:59789"/>
        <dbReference type="ChEBI" id="CHEBI:73542"/>
        <dbReference type="ChEBI" id="CHEBI:74269"/>
        <dbReference type="EC" id="2.1.1.228"/>
    </reaction>
</comment>
<comment type="subunit">
    <text evidence="1">Homodimer.</text>
</comment>
<comment type="subcellular location">
    <subcellularLocation>
        <location evidence="1">Cytoplasm</location>
    </subcellularLocation>
</comment>
<comment type="similarity">
    <text evidence="1">Belongs to the RNA methyltransferase TrmD family.</text>
</comment>
<organism>
    <name type="scientific">Trichodesmium erythraeum (strain IMS101)</name>
    <dbReference type="NCBI Taxonomy" id="203124"/>
    <lineage>
        <taxon>Bacteria</taxon>
        <taxon>Bacillati</taxon>
        <taxon>Cyanobacteriota</taxon>
        <taxon>Cyanophyceae</taxon>
        <taxon>Oscillatoriophycideae</taxon>
        <taxon>Oscillatoriales</taxon>
        <taxon>Microcoleaceae</taxon>
        <taxon>Trichodesmium</taxon>
    </lineage>
</organism>
<evidence type="ECO:0000255" key="1">
    <source>
        <dbReference type="HAMAP-Rule" id="MF_00605"/>
    </source>
</evidence>
<feature type="chain" id="PRO_1000006539" description="tRNA (guanine-N(1)-)-methyltransferase">
    <location>
        <begin position="1"/>
        <end position="227"/>
    </location>
</feature>
<feature type="binding site" evidence="1">
    <location>
        <position position="112"/>
    </location>
    <ligand>
        <name>S-adenosyl-L-methionine</name>
        <dbReference type="ChEBI" id="CHEBI:59789"/>
    </ligand>
</feature>
<feature type="binding site" evidence="1">
    <location>
        <begin position="131"/>
        <end position="136"/>
    </location>
    <ligand>
        <name>S-adenosyl-L-methionine</name>
        <dbReference type="ChEBI" id="CHEBI:59789"/>
    </ligand>
</feature>
<dbReference type="EC" id="2.1.1.228" evidence="1"/>
<dbReference type="EMBL" id="CP000393">
    <property type="protein sequence ID" value="ABG51214.1"/>
    <property type="molecule type" value="Genomic_DNA"/>
</dbReference>
<dbReference type="RefSeq" id="WP_011611587.1">
    <property type="nucleotide sequence ID" value="NC_008312.1"/>
</dbReference>
<dbReference type="SMR" id="Q113W0"/>
<dbReference type="STRING" id="203124.Tery_1962"/>
<dbReference type="KEGG" id="ter:Tery_1962"/>
<dbReference type="eggNOG" id="COG0336">
    <property type="taxonomic scope" value="Bacteria"/>
</dbReference>
<dbReference type="HOGENOM" id="CLU_047363_0_1_3"/>
<dbReference type="OrthoDB" id="9807416at2"/>
<dbReference type="GO" id="GO:0005829">
    <property type="term" value="C:cytosol"/>
    <property type="evidence" value="ECO:0007669"/>
    <property type="project" value="TreeGrafter"/>
</dbReference>
<dbReference type="GO" id="GO:0052906">
    <property type="term" value="F:tRNA (guanine(37)-N1)-methyltransferase activity"/>
    <property type="evidence" value="ECO:0007669"/>
    <property type="project" value="UniProtKB-UniRule"/>
</dbReference>
<dbReference type="GO" id="GO:0002939">
    <property type="term" value="P:tRNA N1-guanine methylation"/>
    <property type="evidence" value="ECO:0007669"/>
    <property type="project" value="TreeGrafter"/>
</dbReference>
<dbReference type="CDD" id="cd18080">
    <property type="entry name" value="TrmD-like"/>
    <property type="match status" value="1"/>
</dbReference>
<dbReference type="FunFam" id="1.10.1270.20:FF:000001">
    <property type="entry name" value="tRNA (guanine-N(1)-)-methyltransferase"/>
    <property type="match status" value="1"/>
</dbReference>
<dbReference type="FunFam" id="3.40.1280.10:FF:000001">
    <property type="entry name" value="tRNA (guanine-N(1)-)-methyltransferase"/>
    <property type="match status" value="1"/>
</dbReference>
<dbReference type="Gene3D" id="3.40.1280.10">
    <property type="match status" value="1"/>
</dbReference>
<dbReference type="Gene3D" id="1.10.1270.20">
    <property type="entry name" value="tRNA(m1g37)methyltransferase, domain 2"/>
    <property type="match status" value="1"/>
</dbReference>
<dbReference type="HAMAP" id="MF_00605">
    <property type="entry name" value="TrmD"/>
    <property type="match status" value="1"/>
</dbReference>
<dbReference type="InterPro" id="IPR029028">
    <property type="entry name" value="Alpha/beta_knot_MTases"/>
</dbReference>
<dbReference type="InterPro" id="IPR023148">
    <property type="entry name" value="tRNA_m1G_MeTrfase_C_sf"/>
</dbReference>
<dbReference type="InterPro" id="IPR002649">
    <property type="entry name" value="tRNA_m1G_MeTrfase_TrmD"/>
</dbReference>
<dbReference type="InterPro" id="IPR029026">
    <property type="entry name" value="tRNA_m1G_MTases_N"/>
</dbReference>
<dbReference type="InterPro" id="IPR016009">
    <property type="entry name" value="tRNA_MeTrfase_TRMD/TRM10"/>
</dbReference>
<dbReference type="NCBIfam" id="NF000648">
    <property type="entry name" value="PRK00026.1"/>
    <property type="match status" value="1"/>
</dbReference>
<dbReference type="NCBIfam" id="TIGR00088">
    <property type="entry name" value="trmD"/>
    <property type="match status" value="1"/>
</dbReference>
<dbReference type="PANTHER" id="PTHR46417">
    <property type="entry name" value="TRNA (GUANINE-N(1)-)-METHYLTRANSFERASE"/>
    <property type="match status" value="1"/>
</dbReference>
<dbReference type="PANTHER" id="PTHR46417:SF1">
    <property type="entry name" value="TRNA (GUANINE-N(1)-)-METHYLTRANSFERASE"/>
    <property type="match status" value="1"/>
</dbReference>
<dbReference type="Pfam" id="PF01746">
    <property type="entry name" value="tRNA_m1G_MT"/>
    <property type="match status" value="1"/>
</dbReference>
<dbReference type="PIRSF" id="PIRSF000386">
    <property type="entry name" value="tRNA_mtase"/>
    <property type="match status" value="1"/>
</dbReference>
<dbReference type="SUPFAM" id="SSF75217">
    <property type="entry name" value="alpha/beta knot"/>
    <property type="match status" value="1"/>
</dbReference>
<sequence length="227" mass="25655">MRFDVITLFPDFFTTPLNSGLLGRAFNKNIAKVNLVNPRNYTTDKYKKVDDESYGGGVGMVLKPEPIFAAVESLPTLSKREVILLTPQGKRMHQGLFRELATDYEQLILICGHYEGIDERVQYLVSREVSLGDFVLTGGEIPALALINGVVRLLPGTVGKAESLECESFESGLLDYPQYTRPANFRGWKVPEVLLSGHHAEIARWRYQQQLQRTKSRRPDLLKNDDN</sequence>
<name>TRMD_TRIEI</name>
<gene>
    <name evidence="1" type="primary">trmD</name>
    <name type="ordered locus">Tery_1962</name>
</gene>
<proteinExistence type="inferred from homology"/>
<protein>
    <recommendedName>
        <fullName evidence="1">tRNA (guanine-N(1)-)-methyltransferase</fullName>
        <ecNumber evidence="1">2.1.1.228</ecNumber>
    </recommendedName>
    <alternativeName>
        <fullName evidence="1">M1G-methyltransferase</fullName>
    </alternativeName>
    <alternativeName>
        <fullName evidence="1">tRNA [GM37] methyltransferase</fullName>
    </alternativeName>
</protein>
<keyword id="KW-0963">Cytoplasm</keyword>
<keyword id="KW-0489">Methyltransferase</keyword>
<keyword id="KW-0949">S-adenosyl-L-methionine</keyword>
<keyword id="KW-0808">Transferase</keyword>
<keyword id="KW-0819">tRNA processing</keyword>
<accession>Q113W0</accession>
<reference key="1">
    <citation type="journal article" date="2015" name="Proc. Natl. Acad. Sci. U.S.A.">
        <title>Trichodesmium genome maintains abundant, widespread noncoding DNA in situ, despite oligotrophic lifestyle.</title>
        <authorList>
            <person name="Walworth N."/>
            <person name="Pfreundt U."/>
            <person name="Nelson W.C."/>
            <person name="Mincer T."/>
            <person name="Heidelberg J.F."/>
            <person name="Fu F."/>
            <person name="Waterbury J.B."/>
            <person name="Glavina del Rio T."/>
            <person name="Goodwin L."/>
            <person name="Kyrpides N.C."/>
            <person name="Land M.L."/>
            <person name="Woyke T."/>
            <person name="Hutchins D.A."/>
            <person name="Hess W.R."/>
            <person name="Webb E.A."/>
        </authorList>
    </citation>
    <scope>NUCLEOTIDE SEQUENCE [LARGE SCALE GENOMIC DNA]</scope>
    <source>
        <strain>IMS101</strain>
    </source>
</reference>